<gene>
    <name type="ordered locus">BR1049</name>
    <name type="ordered locus">BS1330_I1045</name>
</gene>
<keyword id="KW-0285">Flavoprotein</keyword>
<keyword id="KW-0288">FMN</keyword>
<keyword id="KW-0520">NAD</keyword>
<keyword id="KW-0521">NADP</keyword>
<keyword id="KW-0547">Nucleotide-binding</keyword>
<keyword id="KW-0560">Oxidoreductase</keyword>
<comment type="catalytic activity">
    <reaction evidence="1">
        <text>a quinone + NADH + H(+) = a quinol + NAD(+)</text>
        <dbReference type="Rhea" id="RHEA:46160"/>
        <dbReference type="ChEBI" id="CHEBI:15378"/>
        <dbReference type="ChEBI" id="CHEBI:24646"/>
        <dbReference type="ChEBI" id="CHEBI:57540"/>
        <dbReference type="ChEBI" id="CHEBI:57945"/>
        <dbReference type="ChEBI" id="CHEBI:132124"/>
        <dbReference type="EC" id="1.6.5.2"/>
    </reaction>
</comment>
<comment type="catalytic activity">
    <reaction evidence="1">
        <text>a quinone + NADPH + H(+) = a quinol + NADP(+)</text>
        <dbReference type="Rhea" id="RHEA:46164"/>
        <dbReference type="ChEBI" id="CHEBI:15378"/>
        <dbReference type="ChEBI" id="CHEBI:24646"/>
        <dbReference type="ChEBI" id="CHEBI:57783"/>
        <dbReference type="ChEBI" id="CHEBI:58349"/>
        <dbReference type="ChEBI" id="CHEBI:132124"/>
        <dbReference type="EC" id="1.6.5.2"/>
    </reaction>
</comment>
<comment type="cofactor">
    <cofactor evidence="1">
        <name>FMN</name>
        <dbReference type="ChEBI" id="CHEBI:58210"/>
    </cofactor>
    <text evidence="1">Binds 1 FMN per monomer.</text>
</comment>
<comment type="similarity">
    <text evidence="1">Belongs to the WrbA family.</text>
</comment>
<feature type="chain" id="PRO_0000200744" description="NAD(P)H dehydrogenase (quinone)">
    <location>
        <begin position="1"/>
        <end position="199"/>
    </location>
</feature>
<feature type="domain" description="Flavodoxin-like" evidence="1">
    <location>
        <begin position="4"/>
        <end position="190"/>
    </location>
</feature>
<feature type="region of interest" description="Disordered" evidence="2">
    <location>
        <begin position="161"/>
        <end position="181"/>
    </location>
</feature>
<feature type="compositionally biased region" description="Polar residues" evidence="2">
    <location>
        <begin position="163"/>
        <end position="177"/>
    </location>
</feature>
<feature type="binding site" evidence="1">
    <location>
        <begin position="10"/>
        <end position="15"/>
    </location>
    <ligand>
        <name>FMN</name>
        <dbReference type="ChEBI" id="CHEBI:58210"/>
    </ligand>
</feature>
<feature type="binding site" evidence="1">
    <location>
        <position position="12"/>
    </location>
    <ligand>
        <name>NAD(+)</name>
        <dbReference type="ChEBI" id="CHEBI:57540"/>
    </ligand>
</feature>
<feature type="binding site" evidence="1">
    <location>
        <begin position="78"/>
        <end position="80"/>
    </location>
    <ligand>
        <name>FMN</name>
        <dbReference type="ChEBI" id="CHEBI:58210"/>
    </ligand>
</feature>
<feature type="binding site" evidence="1">
    <location>
        <position position="98"/>
    </location>
    <ligand>
        <name>substrate</name>
    </ligand>
</feature>
<feature type="binding site" evidence="1">
    <location>
        <begin position="113"/>
        <end position="119"/>
    </location>
    <ligand>
        <name>FMN</name>
        <dbReference type="ChEBI" id="CHEBI:58210"/>
    </ligand>
</feature>
<feature type="binding site" evidence="1">
    <location>
        <position position="134"/>
    </location>
    <ligand>
        <name>FMN</name>
        <dbReference type="ChEBI" id="CHEBI:58210"/>
    </ligand>
</feature>
<reference key="1">
    <citation type="journal article" date="2002" name="Proc. Natl. Acad. Sci. U.S.A.">
        <title>The Brucella suis genome reveals fundamental similarities between animal and plant pathogens and symbionts.</title>
        <authorList>
            <person name="Paulsen I.T."/>
            <person name="Seshadri R."/>
            <person name="Nelson K.E."/>
            <person name="Eisen J.A."/>
            <person name="Heidelberg J.F."/>
            <person name="Read T.D."/>
            <person name="Dodson R.J."/>
            <person name="Umayam L.A."/>
            <person name="Brinkac L.M."/>
            <person name="Beanan M.J."/>
            <person name="Daugherty S.C."/>
            <person name="DeBoy R.T."/>
            <person name="Durkin A.S."/>
            <person name="Kolonay J.F."/>
            <person name="Madupu R."/>
            <person name="Nelson W.C."/>
            <person name="Ayodeji B."/>
            <person name="Kraul M."/>
            <person name="Shetty J."/>
            <person name="Malek J.A."/>
            <person name="Van Aken S.E."/>
            <person name="Riedmuller S."/>
            <person name="Tettelin H."/>
            <person name="Gill S.R."/>
            <person name="White O."/>
            <person name="Salzberg S.L."/>
            <person name="Hoover D.L."/>
            <person name="Lindler L.E."/>
            <person name="Halling S.M."/>
            <person name="Boyle S.M."/>
            <person name="Fraser C.M."/>
        </authorList>
    </citation>
    <scope>NUCLEOTIDE SEQUENCE [LARGE SCALE GENOMIC DNA]</scope>
    <source>
        <strain>1330</strain>
    </source>
</reference>
<reference key="2">
    <citation type="journal article" date="2011" name="J. Bacteriol.">
        <title>Revised genome sequence of Brucella suis 1330.</title>
        <authorList>
            <person name="Tae H."/>
            <person name="Shallom S."/>
            <person name="Settlage R."/>
            <person name="Preston D."/>
            <person name="Adams L.G."/>
            <person name="Garner H.R."/>
        </authorList>
    </citation>
    <scope>NUCLEOTIDE SEQUENCE [LARGE SCALE GENOMIC DNA]</scope>
    <source>
        <strain>1330</strain>
    </source>
</reference>
<organism>
    <name type="scientific">Brucella suis biovar 1 (strain 1330)</name>
    <dbReference type="NCBI Taxonomy" id="204722"/>
    <lineage>
        <taxon>Bacteria</taxon>
        <taxon>Pseudomonadati</taxon>
        <taxon>Pseudomonadota</taxon>
        <taxon>Alphaproteobacteria</taxon>
        <taxon>Hyphomicrobiales</taxon>
        <taxon>Brucellaceae</taxon>
        <taxon>Brucella/Ochrobactrum group</taxon>
        <taxon>Brucella</taxon>
    </lineage>
</organism>
<evidence type="ECO:0000255" key="1">
    <source>
        <dbReference type="HAMAP-Rule" id="MF_01017"/>
    </source>
</evidence>
<evidence type="ECO:0000256" key="2">
    <source>
        <dbReference type="SAM" id="MobiDB-lite"/>
    </source>
</evidence>
<dbReference type="EC" id="1.6.5.2" evidence="1"/>
<dbReference type="EMBL" id="AE014291">
    <property type="protein sequence ID" value="AAN29969.1"/>
    <property type="molecule type" value="Genomic_DNA"/>
</dbReference>
<dbReference type="EMBL" id="CP002997">
    <property type="protein sequence ID" value="AEM18387.1"/>
    <property type="molecule type" value="Genomic_DNA"/>
</dbReference>
<dbReference type="SMR" id="Q8G0P0"/>
<dbReference type="KEGG" id="bms:BR1049"/>
<dbReference type="KEGG" id="bsi:BS1330_I1045"/>
<dbReference type="PATRIC" id="fig|204722.21.peg.792"/>
<dbReference type="HOGENOM" id="CLU_051402_0_2_5"/>
<dbReference type="PhylomeDB" id="Q8G0P0"/>
<dbReference type="Proteomes" id="UP000007104">
    <property type="component" value="Chromosome I"/>
</dbReference>
<dbReference type="GO" id="GO:0016020">
    <property type="term" value="C:membrane"/>
    <property type="evidence" value="ECO:0007669"/>
    <property type="project" value="TreeGrafter"/>
</dbReference>
<dbReference type="GO" id="GO:0050660">
    <property type="term" value="F:flavin adenine dinucleotide binding"/>
    <property type="evidence" value="ECO:0007669"/>
    <property type="project" value="UniProtKB-UniRule"/>
</dbReference>
<dbReference type="GO" id="GO:0010181">
    <property type="term" value="F:FMN binding"/>
    <property type="evidence" value="ECO:0007669"/>
    <property type="project" value="InterPro"/>
</dbReference>
<dbReference type="GO" id="GO:0051287">
    <property type="term" value="F:NAD binding"/>
    <property type="evidence" value="ECO:0007669"/>
    <property type="project" value="UniProtKB-UniRule"/>
</dbReference>
<dbReference type="GO" id="GO:0050136">
    <property type="term" value="F:NADH:ubiquinone reductase (non-electrogenic) activity"/>
    <property type="evidence" value="ECO:0007669"/>
    <property type="project" value="RHEA"/>
</dbReference>
<dbReference type="GO" id="GO:0050661">
    <property type="term" value="F:NADP binding"/>
    <property type="evidence" value="ECO:0007669"/>
    <property type="project" value="UniProtKB-UniRule"/>
</dbReference>
<dbReference type="GO" id="GO:0008753">
    <property type="term" value="F:NADPH dehydrogenase (quinone) activity"/>
    <property type="evidence" value="ECO:0007669"/>
    <property type="project" value="RHEA"/>
</dbReference>
<dbReference type="FunFam" id="3.40.50.360:FF:000001">
    <property type="entry name" value="NAD(P)H dehydrogenase (Quinone) FQR1-like"/>
    <property type="match status" value="1"/>
</dbReference>
<dbReference type="Gene3D" id="3.40.50.360">
    <property type="match status" value="1"/>
</dbReference>
<dbReference type="HAMAP" id="MF_01017">
    <property type="entry name" value="NQOR"/>
    <property type="match status" value="1"/>
</dbReference>
<dbReference type="InterPro" id="IPR008254">
    <property type="entry name" value="Flavodoxin/NO_synth"/>
</dbReference>
<dbReference type="InterPro" id="IPR029039">
    <property type="entry name" value="Flavoprotein-like_sf"/>
</dbReference>
<dbReference type="InterPro" id="IPR010089">
    <property type="entry name" value="Flavoprotein_WrbA-like"/>
</dbReference>
<dbReference type="InterPro" id="IPR005025">
    <property type="entry name" value="FMN_Rdtase-like_dom"/>
</dbReference>
<dbReference type="InterPro" id="IPR037513">
    <property type="entry name" value="NQO"/>
</dbReference>
<dbReference type="NCBIfam" id="TIGR01755">
    <property type="entry name" value="flav_wrbA"/>
    <property type="match status" value="1"/>
</dbReference>
<dbReference type="NCBIfam" id="NF002999">
    <property type="entry name" value="PRK03767.1"/>
    <property type="match status" value="1"/>
</dbReference>
<dbReference type="PANTHER" id="PTHR30546">
    <property type="entry name" value="FLAVODOXIN-RELATED PROTEIN WRBA-RELATED"/>
    <property type="match status" value="1"/>
</dbReference>
<dbReference type="PANTHER" id="PTHR30546:SF23">
    <property type="entry name" value="FLAVOPROTEIN-LIKE PROTEIN YCP4-RELATED"/>
    <property type="match status" value="1"/>
</dbReference>
<dbReference type="Pfam" id="PF03358">
    <property type="entry name" value="FMN_red"/>
    <property type="match status" value="1"/>
</dbReference>
<dbReference type="SUPFAM" id="SSF52218">
    <property type="entry name" value="Flavoproteins"/>
    <property type="match status" value="1"/>
</dbReference>
<dbReference type="PROSITE" id="PS50902">
    <property type="entry name" value="FLAVODOXIN_LIKE"/>
    <property type="match status" value="1"/>
</dbReference>
<protein>
    <recommendedName>
        <fullName evidence="1">NAD(P)H dehydrogenase (quinone)</fullName>
        <ecNumber evidence="1">1.6.5.2</ecNumber>
    </recommendedName>
    <alternativeName>
        <fullName>Flavoprotein WrbA</fullName>
    </alternativeName>
    <alternativeName>
        <fullName evidence="1">NAD(P)H:quinone oxidoreductase</fullName>
        <shortName evidence="1">NQO</shortName>
    </alternativeName>
</protein>
<sequence>MVKMLVLYYSAYGHMEQMAKAAAEGAREGGAEVTLKRVPELVPEEVAKASHYKIDQEAPIATPGELADYDAIIIGTATRYGMMASQMKNFLDQTGGLWAKGALINKVGSVMVSTATQYGGAELALISTQWQMQHHGMIIVPLSYAYREQMGNDVVRGGAPYGMTTTADGDGSRQPSAQELDGARFQGRRVAEITAKLHG</sequence>
<proteinExistence type="inferred from homology"/>
<accession>Q8G0P0</accession>
<accession>G0K9X1</accession>
<name>NQOR_BRUSU</name>